<name>RL17_HERAR</name>
<organism>
    <name type="scientific">Herminiimonas arsenicoxydans</name>
    <dbReference type="NCBI Taxonomy" id="204773"/>
    <lineage>
        <taxon>Bacteria</taxon>
        <taxon>Pseudomonadati</taxon>
        <taxon>Pseudomonadota</taxon>
        <taxon>Betaproteobacteria</taxon>
        <taxon>Burkholderiales</taxon>
        <taxon>Oxalobacteraceae</taxon>
        <taxon>Herminiimonas</taxon>
    </lineage>
</organism>
<comment type="subunit">
    <text evidence="1">Part of the 50S ribosomal subunit. Contacts protein L32.</text>
</comment>
<comment type="similarity">
    <text evidence="1">Belongs to the bacterial ribosomal protein bL17 family.</text>
</comment>
<protein>
    <recommendedName>
        <fullName evidence="1">Large ribosomal subunit protein bL17</fullName>
    </recommendedName>
    <alternativeName>
        <fullName evidence="2">50S ribosomal protein L17</fullName>
    </alternativeName>
</protein>
<dbReference type="EMBL" id="CU207211">
    <property type="protein sequence ID" value="CAL63249.1"/>
    <property type="molecule type" value="Genomic_DNA"/>
</dbReference>
<dbReference type="SMR" id="A4G9R2"/>
<dbReference type="STRING" id="204773.HEAR3140"/>
<dbReference type="KEGG" id="har:HEAR3140"/>
<dbReference type="eggNOG" id="COG0203">
    <property type="taxonomic scope" value="Bacteria"/>
</dbReference>
<dbReference type="HOGENOM" id="CLU_074407_2_0_4"/>
<dbReference type="OrthoDB" id="9809073at2"/>
<dbReference type="Proteomes" id="UP000006697">
    <property type="component" value="Chromosome"/>
</dbReference>
<dbReference type="GO" id="GO:0022625">
    <property type="term" value="C:cytosolic large ribosomal subunit"/>
    <property type="evidence" value="ECO:0007669"/>
    <property type="project" value="TreeGrafter"/>
</dbReference>
<dbReference type="GO" id="GO:0003735">
    <property type="term" value="F:structural constituent of ribosome"/>
    <property type="evidence" value="ECO:0007669"/>
    <property type="project" value="InterPro"/>
</dbReference>
<dbReference type="GO" id="GO:0006412">
    <property type="term" value="P:translation"/>
    <property type="evidence" value="ECO:0007669"/>
    <property type="project" value="UniProtKB-UniRule"/>
</dbReference>
<dbReference type="FunFam" id="3.90.1030.10:FF:000001">
    <property type="entry name" value="50S ribosomal protein L17"/>
    <property type="match status" value="1"/>
</dbReference>
<dbReference type="Gene3D" id="3.90.1030.10">
    <property type="entry name" value="Ribosomal protein L17"/>
    <property type="match status" value="1"/>
</dbReference>
<dbReference type="HAMAP" id="MF_01368">
    <property type="entry name" value="Ribosomal_bL17"/>
    <property type="match status" value="1"/>
</dbReference>
<dbReference type="InterPro" id="IPR000456">
    <property type="entry name" value="Ribosomal_bL17"/>
</dbReference>
<dbReference type="InterPro" id="IPR047859">
    <property type="entry name" value="Ribosomal_bL17_CS"/>
</dbReference>
<dbReference type="InterPro" id="IPR036373">
    <property type="entry name" value="Ribosomal_bL17_sf"/>
</dbReference>
<dbReference type="NCBIfam" id="TIGR00059">
    <property type="entry name" value="L17"/>
    <property type="match status" value="1"/>
</dbReference>
<dbReference type="PANTHER" id="PTHR14413:SF16">
    <property type="entry name" value="LARGE RIBOSOMAL SUBUNIT PROTEIN BL17M"/>
    <property type="match status" value="1"/>
</dbReference>
<dbReference type="PANTHER" id="PTHR14413">
    <property type="entry name" value="RIBOSOMAL PROTEIN L17"/>
    <property type="match status" value="1"/>
</dbReference>
<dbReference type="Pfam" id="PF01196">
    <property type="entry name" value="Ribosomal_L17"/>
    <property type="match status" value="1"/>
</dbReference>
<dbReference type="SUPFAM" id="SSF64263">
    <property type="entry name" value="Prokaryotic ribosomal protein L17"/>
    <property type="match status" value="1"/>
</dbReference>
<dbReference type="PROSITE" id="PS01167">
    <property type="entry name" value="RIBOSOMAL_L17"/>
    <property type="match status" value="1"/>
</dbReference>
<sequence>MRHRHGLRKLNRTSSHRLAMLRNMTVSLLRHEAIKTTLPKAKELRRVIEPILTLGKTDSLANKRLAFNRLRDREMVVKLFAELGPRYANRNGGYLRILKMGFRAGDNAPMAFIELLDRPETTEAVEDNSGE</sequence>
<accession>A4G9R2</accession>
<keyword id="KW-1185">Reference proteome</keyword>
<keyword id="KW-0687">Ribonucleoprotein</keyword>
<keyword id="KW-0689">Ribosomal protein</keyword>
<feature type="chain" id="PRO_1000055843" description="Large ribosomal subunit protein bL17">
    <location>
        <begin position="1"/>
        <end position="131"/>
    </location>
</feature>
<reference key="1">
    <citation type="journal article" date="2007" name="PLoS Genet.">
        <title>A tale of two oxidation states: bacterial colonization of arsenic-rich environments.</title>
        <authorList>
            <person name="Muller D."/>
            <person name="Medigue C."/>
            <person name="Koechler S."/>
            <person name="Barbe V."/>
            <person name="Barakat M."/>
            <person name="Talla E."/>
            <person name="Bonnefoy V."/>
            <person name="Krin E."/>
            <person name="Arsene-Ploetze F."/>
            <person name="Carapito C."/>
            <person name="Chandler M."/>
            <person name="Cournoyer B."/>
            <person name="Cruveiller S."/>
            <person name="Dossat C."/>
            <person name="Duval S."/>
            <person name="Heymann M."/>
            <person name="Leize E."/>
            <person name="Lieutaud A."/>
            <person name="Lievremont D."/>
            <person name="Makita Y."/>
            <person name="Mangenot S."/>
            <person name="Nitschke W."/>
            <person name="Ortet P."/>
            <person name="Perdrial N."/>
            <person name="Schoepp B."/>
            <person name="Siguier P."/>
            <person name="Simeonova D.D."/>
            <person name="Rouy Z."/>
            <person name="Segurens B."/>
            <person name="Turlin E."/>
            <person name="Vallenet D."/>
            <person name="van Dorsselaer A."/>
            <person name="Weiss S."/>
            <person name="Weissenbach J."/>
            <person name="Lett M.-C."/>
            <person name="Danchin A."/>
            <person name="Bertin P.N."/>
        </authorList>
    </citation>
    <scope>NUCLEOTIDE SEQUENCE [LARGE SCALE GENOMIC DNA]</scope>
    <source>
        <strain>ULPAs1</strain>
    </source>
</reference>
<proteinExistence type="inferred from homology"/>
<evidence type="ECO:0000255" key="1">
    <source>
        <dbReference type="HAMAP-Rule" id="MF_01368"/>
    </source>
</evidence>
<evidence type="ECO:0000305" key="2"/>
<gene>
    <name evidence="1" type="primary">rplQ</name>
    <name type="ordered locus">HEAR3140</name>
</gene>